<accession>Q73FP5</accession>
<reference key="1">
    <citation type="journal article" date="2004" name="PLoS Biol.">
        <title>Phylogenomics of the reproductive parasite Wolbachia pipientis wMel: a streamlined genome overrun by mobile genetic elements.</title>
        <authorList>
            <person name="Wu M."/>
            <person name="Sun L.V."/>
            <person name="Vamathevan J.J."/>
            <person name="Riegler M."/>
            <person name="DeBoy R.T."/>
            <person name="Brownlie J.C."/>
            <person name="McGraw E.A."/>
            <person name="Martin W."/>
            <person name="Esser C."/>
            <person name="Ahmadinejad N."/>
            <person name="Wiegand C."/>
            <person name="Madupu R."/>
            <person name="Beanan M.J."/>
            <person name="Brinkac L.M."/>
            <person name="Daugherty S.C."/>
            <person name="Durkin A.S."/>
            <person name="Kolonay J.F."/>
            <person name="Nelson W.C."/>
            <person name="Mohamoud Y."/>
            <person name="Lee P."/>
            <person name="Berry K.J."/>
            <person name="Young M.B."/>
            <person name="Utterback T.R."/>
            <person name="Weidman J.F."/>
            <person name="Nierman W.C."/>
            <person name="Paulsen I.T."/>
            <person name="Nelson K.E."/>
            <person name="Tettelin H."/>
            <person name="O'Neill S.L."/>
            <person name="Eisen J.A."/>
        </authorList>
    </citation>
    <scope>NUCLEOTIDE SEQUENCE [LARGE SCALE GENOMIC DNA]</scope>
</reference>
<sequence length="188" mass="21353">MAERANDIRPGQVLEHNGGLFLVVGIMHTQPGKGGAYIQAEMKNIKTGAKHYERFRSDATIRRAILDEEEYVYLFTEGNIVNLMHPSNYEQITINLDLLGEKKIYLQDNMKIKVVAYQDKIISAHVPDYVTLAVKETESVIKGQTATASYKPAILENGMRVNVPQFIKEEDKIVVYTPGDSYYERVKE</sequence>
<organism>
    <name type="scientific">Wolbachia pipientis wMel</name>
    <dbReference type="NCBI Taxonomy" id="163164"/>
    <lineage>
        <taxon>Bacteria</taxon>
        <taxon>Pseudomonadati</taxon>
        <taxon>Pseudomonadota</taxon>
        <taxon>Alphaproteobacteria</taxon>
        <taxon>Rickettsiales</taxon>
        <taxon>Anaplasmataceae</taxon>
        <taxon>Wolbachieae</taxon>
        <taxon>Wolbachia</taxon>
    </lineage>
</organism>
<feature type="chain" id="PRO_0000094370" description="Elongation factor P">
    <location>
        <begin position="1"/>
        <end position="188"/>
    </location>
</feature>
<gene>
    <name evidence="1" type="primary">efp</name>
    <name type="ordered locus">WD_1281</name>
</gene>
<keyword id="KW-0963">Cytoplasm</keyword>
<keyword id="KW-0251">Elongation factor</keyword>
<keyword id="KW-0648">Protein biosynthesis</keyword>
<comment type="function">
    <text evidence="1">Involved in peptide bond synthesis. Stimulates efficient translation and peptide-bond synthesis on native or reconstituted 70S ribosomes in vitro. Probably functions indirectly by altering the affinity of the ribosome for aminoacyl-tRNA, thus increasing their reactivity as acceptors for peptidyl transferase.</text>
</comment>
<comment type="pathway">
    <text evidence="1">Protein biosynthesis; polypeptide chain elongation.</text>
</comment>
<comment type="subcellular location">
    <subcellularLocation>
        <location evidence="1">Cytoplasm</location>
    </subcellularLocation>
</comment>
<comment type="similarity">
    <text evidence="1">Belongs to the elongation factor P family.</text>
</comment>
<proteinExistence type="inferred from homology"/>
<evidence type="ECO:0000255" key="1">
    <source>
        <dbReference type="HAMAP-Rule" id="MF_00141"/>
    </source>
</evidence>
<protein>
    <recommendedName>
        <fullName evidence="1">Elongation factor P</fullName>
        <shortName evidence="1">EF-P</shortName>
    </recommendedName>
</protein>
<name>EFP_WOLPM</name>
<dbReference type="EMBL" id="AE017196">
    <property type="protein sequence ID" value="AAS14925.1"/>
    <property type="molecule type" value="Genomic_DNA"/>
</dbReference>
<dbReference type="RefSeq" id="WP_006279719.1">
    <property type="nucleotide sequence ID" value="NZ_OX384529.1"/>
</dbReference>
<dbReference type="SMR" id="Q73FP5"/>
<dbReference type="EnsemblBacteria" id="AAS14925">
    <property type="protein sequence ID" value="AAS14925"/>
    <property type="gene ID" value="WD_1281"/>
</dbReference>
<dbReference type="GeneID" id="70036746"/>
<dbReference type="KEGG" id="wol:WD_1281"/>
<dbReference type="eggNOG" id="COG0231">
    <property type="taxonomic scope" value="Bacteria"/>
</dbReference>
<dbReference type="UniPathway" id="UPA00345"/>
<dbReference type="Proteomes" id="UP000008215">
    <property type="component" value="Chromosome"/>
</dbReference>
<dbReference type="GO" id="GO:0005737">
    <property type="term" value="C:cytoplasm"/>
    <property type="evidence" value="ECO:0007669"/>
    <property type="project" value="UniProtKB-SubCell"/>
</dbReference>
<dbReference type="GO" id="GO:0003746">
    <property type="term" value="F:translation elongation factor activity"/>
    <property type="evidence" value="ECO:0007669"/>
    <property type="project" value="UniProtKB-UniRule"/>
</dbReference>
<dbReference type="GO" id="GO:0043043">
    <property type="term" value="P:peptide biosynthetic process"/>
    <property type="evidence" value="ECO:0007669"/>
    <property type="project" value="InterPro"/>
</dbReference>
<dbReference type="CDD" id="cd05794">
    <property type="entry name" value="S1_EF-P_repeat_2"/>
    <property type="match status" value="1"/>
</dbReference>
<dbReference type="FunFam" id="2.40.50.140:FF:000004">
    <property type="entry name" value="Elongation factor P"/>
    <property type="match status" value="1"/>
</dbReference>
<dbReference type="Gene3D" id="2.30.30.30">
    <property type="match status" value="1"/>
</dbReference>
<dbReference type="Gene3D" id="2.40.50.140">
    <property type="entry name" value="Nucleic acid-binding proteins"/>
    <property type="match status" value="2"/>
</dbReference>
<dbReference type="HAMAP" id="MF_00141">
    <property type="entry name" value="EF_P"/>
    <property type="match status" value="1"/>
</dbReference>
<dbReference type="InterPro" id="IPR015365">
    <property type="entry name" value="Elong-fact-P_C"/>
</dbReference>
<dbReference type="InterPro" id="IPR012340">
    <property type="entry name" value="NA-bd_OB-fold"/>
</dbReference>
<dbReference type="InterPro" id="IPR014722">
    <property type="entry name" value="Rib_uL2_dom2"/>
</dbReference>
<dbReference type="InterPro" id="IPR020599">
    <property type="entry name" value="Transl_elong_fac_P/YeiP"/>
</dbReference>
<dbReference type="InterPro" id="IPR013185">
    <property type="entry name" value="Transl_elong_KOW-like"/>
</dbReference>
<dbReference type="InterPro" id="IPR001059">
    <property type="entry name" value="Transl_elong_P/YeiP_cen"/>
</dbReference>
<dbReference type="InterPro" id="IPR011768">
    <property type="entry name" value="Transl_elongation_fac_P"/>
</dbReference>
<dbReference type="InterPro" id="IPR008991">
    <property type="entry name" value="Translation_prot_SH3-like_sf"/>
</dbReference>
<dbReference type="NCBIfam" id="TIGR00038">
    <property type="entry name" value="efp"/>
    <property type="match status" value="1"/>
</dbReference>
<dbReference type="NCBIfam" id="NF001810">
    <property type="entry name" value="PRK00529.1"/>
    <property type="match status" value="1"/>
</dbReference>
<dbReference type="PANTHER" id="PTHR30053">
    <property type="entry name" value="ELONGATION FACTOR P"/>
    <property type="match status" value="1"/>
</dbReference>
<dbReference type="PANTHER" id="PTHR30053:SF14">
    <property type="entry name" value="TRANSLATION ELONGATION FACTOR KOW-LIKE DOMAIN-CONTAINING PROTEIN"/>
    <property type="match status" value="1"/>
</dbReference>
<dbReference type="Pfam" id="PF01132">
    <property type="entry name" value="EFP"/>
    <property type="match status" value="1"/>
</dbReference>
<dbReference type="Pfam" id="PF08207">
    <property type="entry name" value="EFP_N"/>
    <property type="match status" value="1"/>
</dbReference>
<dbReference type="Pfam" id="PF09285">
    <property type="entry name" value="Elong-fact-P_C"/>
    <property type="match status" value="1"/>
</dbReference>
<dbReference type="PIRSF" id="PIRSF005901">
    <property type="entry name" value="EF-P"/>
    <property type="match status" value="1"/>
</dbReference>
<dbReference type="SMART" id="SM01185">
    <property type="entry name" value="EFP"/>
    <property type="match status" value="1"/>
</dbReference>
<dbReference type="SMART" id="SM00841">
    <property type="entry name" value="Elong-fact-P_C"/>
    <property type="match status" value="1"/>
</dbReference>
<dbReference type="SUPFAM" id="SSF50249">
    <property type="entry name" value="Nucleic acid-binding proteins"/>
    <property type="match status" value="2"/>
</dbReference>
<dbReference type="SUPFAM" id="SSF50104">
    <property type="entry name" value="Translation proteins SH3-like domain"/>
    <property type="match status" value="1"/>
</dbReference>